<evidence type="ECO:0000255" key="1">
    <source>
        <dbReference type="HAMAP-Rule" id="MF_00017"/>
    </source>
</evidence>
<feature type="chain" id="PRO_1000001515" description="Recombination protein RecR">
    <location>
        <begin position="1"/>
        <end position="200"/>
    </location>
</feature>
<feature type="domain" description="Toprim" evidence="1">
    <location>
        <begin position="82"/>
        <end position="177"/>
    </location>
</feature>
<feature type="zinc finger region" description="C4-type" evidence="1">
    <location>
        <begin position="59"/>
        <end position="74"/>
    </location>
</feature>
<dbReference type="EMBL" id="CP000548">
    <property type="protein sequence ID" value="ABO06164.1"/>
    <property type="molecule type" value="Genomic_DNA"/>
</dbReference>
<dbReference type="RefSeq" id="WP_004193537.1">
    <property type="nucleotide sequence ID" value="NZ_CP007802.1"/>
</dbReference>
<dbReference type="SMR" id="A3MK89"/>
<dbReference type="GeneID" id="93060489"/>
<dbReference type="KEGG" id="bmaz:BM44_1977"/>
<dbReference type="KEGG" id="bmn:BMA10247_1121"/>
<dbReference type="PATRIC" id="fig|320389.8.peg.2220"/>
<dbReference type="GO" id="GO:0003677">
    <property type="term" value="F:DNA binding"/>
    <property type="evidence" value="ECO:0007669"/>
    <property type="project" value="UniProtKB-UniRule"/>
</dbReference>
<dbReference type="GO" id="GO:0008270">
    <property type="term" value="F:zinc ion binding"/>
    <property type="evidence" value="ECO:0007669"/>
    <property type="project" value="UniProtKB-KW"/>
</dbReference>
<dbReference type="GO" id="GO:0006310">
    <property type="term" value="P:DNA recombination"/>
    <property type="evidence" value="ECO:0007669"/>
    <property type="project" value="UniProtKB-UniRule"/>
</dbReference>
<dbReference type="GO" id="GO:0006281">
    <property type="term" value="P:DNA repair"/>
    <property type="evidence" value="ECO:0007669"/>
    <property type="project" value="UniProtKB-UniRule"/>
</dbReference>
<dbReference type="CDD" id="cd01025">
    <property type="entry name" value="TOPRIM_recR"/>
    <property type="match status" value="1"/>
</dbReference>
<dbReference type="Gene3D" id="3.40.1360.10">
    <property type="match status" value="1"/>
</dbReference>
<dbReference type="Gene3D" id="6.10.250.240">
    <property type="match status" value="1"/>
</dbReference>
<dbReference type="Gene3D" id="1.10.8.420">
    <property type="entry name" value="RecR Domain 1"/>
    <property type="match status" value="1"/>
</dbReference>
<dbReference type="HAMAP" id="MF_00017">
    <property type="entry name" value="RecR"/>
    <property type="match status" value="1"/>
</dbReference>
<dbReference type="InterPro" id="IPR000093">
    <property type="entry name" value="DNA_Rcmb_RecR"/>
</dbReference>
<dbReference type="InterPro" id="IPR023627">
    <property type="entry name" value="Rcmb_RecR"/>
</dbReference>
<dbReference type="InterPro" id="IPR015967">
    <property type="entry name" value="Rcmb_RecR_Znf"/>
</dbReference>
<dbReference type="InterPro" id="IPR006171">
    <property type="entry name" value="TOPRIM_dom"/>
</dbReference>
<dbReference type="InterPro" id="IPR034137">
    <property type="entry name" value="TOPRIM_RecR"/>
</dbReference>
<dbReference type="NCBIfam" id="TIGR00615">
    <property type="entry name" value="recR"/>
    <property type="match status" value="1"/>
</dbReference>
<dbReference type="PANTHER" id="PTHR30446">
    <property type="entry name" value="RECOMBINATION PROTEIN RECR"/>
    <property type="match status" value="1"/>
</dbReference>
<dbReference type="PANTHER" id="PTHR30446:SF0">
    <property type="entry name" value="RECOMBINATION PROTEIN RECR"/>
    <property type="match status" value="1"/>
</dbReference>
<dbReference type="Pfam" id="PF21175">
    <property type="entry name" value="RecR_C"/>
    <property type="match status" value="1"/>
</dbReference>
<dbReference type="Pfam" id="PF21176">
    <property type="entry name" value="RecR_HhH"/>
    <property type="match status" value="1"/>
</dbReference>
<dbReference type="Pfam" id="PF02132">
    <property type="entry name" value="RecR_ZnF"/>
    <property type="match status" value="1"/>
</dbReference>
<dbReference type="Pfam" id="PF13662">
    <property type="entry name" value="Toprim_4"/>
    <property type="match status" value="1"/>
</dbReference>
<dbReference type="SMART" id="SM00493">
    <property type="entry name" value="TOPRIM"/>
    <property type="match status" value="1"/>
</dbReference>
<dbReference type="SUPFAM" id="SSF111304">
    <property type="entry name" value="Recombination protein RecR"/>
    <property type="match status" value="1"/>
</dbReference>
<dbReference type="PROSITE" id="PS01300">
    <property type="entry name" value="RECR"/>
    <property type="match status" value="1"/>
</dbReference>
<dbReference type="PROSITE" id="PS50880">
    <property type="entry name" value="TOPRIM"/>
    <property type="match status" value="1"/>
</dbReference>
<accession>A3MK89</accession>
<organism>
    <name type="scientific">Burkholderia mallei (strain NCTC 10247)</name>
    <dbReference type="NCBI Taxonomy" id="320389"/>
    <lineage>
        <taxon>Bacteria</taxon>
        <taxon>Pseudomonadati</taxon>
        <taxon>Pseudomonadota</taxon>
        <taxon>Betaproteobacteria</taxon>
        <taxon>Burkholderiales</taxon>
        <taxon>Burkholderiaceae</taxon>
        <taxon>Burkholderia</taxon>
        <taxon>pseudomallei group</taxon>
    </lineage>
</organism>
<gene>
    <name evidence="1" type="primary">recR</name>
    <name type="ordered locus">BMA10247_1121</name>
</gene>
<reference key="1">
    <citation type="journal article" date="2010" name="Genome Biol. Evol.">
        <title>Continuing evolution of Burkholderia mallei through genome reduction and large-scale rearrangements.</title>
        <authorList>
            <person name="Losada L."/>
            <person name="Ronning C.M."/>
            <person name="DeShazer D."/>
            <person name="Woods D."/>
            <person name="Fedorova N."/>
            <person name="Kim H.S."/>
            <person name="Shabalina S.A."/>
            <person name="Pearson T.R."/>
            <person name="Brinkac L."/>
            <person name="Tan P."/>
            <person name="Nandi T."/>
            <person name="Crabtree J."/>
            <person name="Badger J."/>
            <person name="Beckstrom-Sternberg S."/>
            <person name="Saqib M."/>
            <person name="Schutzer S.E."/>
            <person name="Keim P."/>
            <person name="Nierman W.C."/>
        </authorList>
    </citation>
    <scope>NUCLEOTIDE SEQUENCE [LARGE SCALE GENOMIC DNA]</scope>
    <source>
        <strain>NCTC 10247</strain>
    </source>
</reference>
<keyword id="KW-0227">DNA damage</keyword>
<keyword id="KW-0233">DNA recombination</keyword>
<keyword id="KW-0234">DNA repair</keyword>
<keyword id="KW-0479">Metal-binding</keyword>
<keyword id="KW-0862">Zinc</keyword>
<keyword id="KW-0863">Zinc-finger</keyword>
<sequence>MSIKPPSALSELVEALRALPGVGPKSAQRIAYHLMQHDREGAERLGRSLLFATEHLRHCEKCNTFTEAQICEVCSDPERDPALLCVVETPADQIMLEQTMTYRGLYFVLMGRLSPLDGIGPKEIHFDRLVRRASDGIVKEVVLATNFTNEGEATAHYLGQTLKARGLAVTRLARGVPVGGELEYVDAGTIARAMLDRRTL</sequence>
<protein>
    <recommendedName>
        <fullName evidence="1">Recombination protein RecR</fullName>
    </recommendedName>
</protein>
<proteinExistence type="inferred from homology"/>
<comment type="function">
    <text evidence="1">May play a role in DNA repair. It seems to be involved in an RecBC-independent recombinational process of DNA repair. It may act with RecF and RecO.</text>
</comment>
<comment type="similarity">
    <text evidence="1">Belongs to the RecR family.</text>
</comment>
<name>RECR_BURM7</name>